<proteinExistence type="predicted"/>
<keyword id="KW-0150">Chloroplast</keyword>
<keyword id="KW-0934">Plastid</keyword>
<organism>
    <name type="scientific">Porphyra purpurea</name>
    <name type="common">Red seaweed</name>
    <name type="synonym">Ulva purpurea</name>
    <dbReference type="NCBI Taxonomy" id="2787"/>
    <lineage>
        <taxon>Eukaryota</taxon>
        <taxon>Rhodophyta</taxon>
        <taxon>Bangiophyceae</taxon>
        <taxon>Bangiales</taxon>
        <taxon>Bangiaceae</taxon>
        <taxon>Porphyra</taxon>
    </lineage>
</organism>
<sequence>MQAKNNKPSDDFYDSADMQELAGETPIGWSATCLDQTICYYLDCDQEHFEDLDNSNHN</sequence>
<protein>
    <recommendedName>
        <fullName>Uncharacterized protein ORF58</fullName>
    </recommendedName>
</protein>
<comment type="subcellular location">
    <subcellularLocation>
        <location>Plastid</location>
        <location>Chloroplast</location>
    </subcellularLocation>
</comment>
<name>YCX9_PORPU</name>
<feature type="chain" id="PRO_0000217475" description="Uncharacterized protein ORF58">
    <location>
        <begin position="1"/>
        <end position="58"/>
    </location>
</feature>
<accession>P51223</accession>
<reference key="1">
    <citation type="journal article" date="1995" name="Plant Mol. Biol. Rep.">
        <title>Complete nucleotide sequence of the Porphyra purpurea chloroplast genome.</title>
        <authorList>
            <person name="Reith M.E."/>
            <person name="Munholland J."/>
        </authorList>
    </citation>
    <scope>NUCLEOTIDE SEQUENCE [LARGE SCALE GENOMIC DNA]</scope>
    <source>
        <strain>Avonport</strain>
    </source>
</reference>
<geneLocation type="chloroplast"/>
<dbReference type="EMBL" id="U38804">
    <property type="protein sequence ID" value="AAC08109.1"/>
    <property type="molecule type" value="Genomic_DNA"/>
</dbReference>
<dbReference type="PIR" id="S73144">
    <property type="entry name" value="S73144"/>
</dbReference>
<dbReference type="RefSeq" id="NP_053833.1">
    <property type="nucleotide sequence ID" value="NC_000925.1"/>
</dbReference>
<dbReference type="GeneID" id="809850"/>
<dbReference type="GO" id="GO:0009507">
    <property type="term" value="C:chloroplast"/>
    <property type="evidence" value="ECO:0007669"/>
    <property type="project" value="UniProtKB-SubCell"/>
</dbReference>